<evidence type="ECO:0000255" key="1"/>
<evidence type="ECO:0000255" key="2">
    <source>
        <dbReference type="PROSITE-ProRule" id="PRU00114"/>
    </source>
</evidence>
<evidence type="ECO:0000255" key="3">
    <source>
        <dbReference type="PROSITE-ProRule" id="PRU00204"/>
    </source>
</evidence>
<evidence type="ECO:0000269" key="4">
    <source>
    </source>
</evidence>
<evidence type="ECO:0000269" key="5">
    <source>
    </source>
</evidence>
<evidence type="ECO:0000269" key="6">
    <source>
    </source>
</evidence>
<evidence type="ECO:0000305" key="7"/>
<feature type="signal peptide" evidence="1">
    <location>
        <begin position="1"/>
        <end position="21"/>
    </location>
</feature>
<feature type="chain" id="PRO_0000015446" description="Interleukin-1 receptor-like 2">
    <location>
        <begin position="22"/>
        <end position="574"/>
    </location>
</feature>
<feature type="topological domain" description="Extracellular" evidence="1">
    <location>
        <begin position="22"/>
        <end position="338"/>
    </location>
</feature>
<feature type="transmembrane region" description="Helical" evidence="1">
    <location>
        <begin position="339"/>
        <end position="359"/>
    </location>
</feature>
<feature type="topological domain" description="Cytoplasmic" evidence="1">
    <location>
        <begin position="360"/>
        <end position="574"/>
    </location>
</feature>
<feature type="domain" description="Ig-like C2-type 1">
    <location>
        <begin position="25"/>
        <end position="113"/>
    </location>
</feature>
<feature type="domain" description="Ig-like C2-type 2">
    <location>
        <begin position="132"/>
        <end position="215"/>
    </location>
</feature>
<feature type="domain" description="Ig-like C2-type 3">
    <location>
        <begin position="225"/>
        <end position="321"/>
    </location>
</feature>
<feature type="domain" description="TIR" evidence="3">
    <location>
        <begin position="384"/>
        <end position="539"/>
    </location>
</feature>
<feature type="active site" evidence="3">
    <location>
        <position position="470"/>
    </location>
</feature>
<feature type="glycosylation site" description="N-linked (GlcNAc...) asparagine" evidence="1">
    <location>
        <position position="43"/>
    </location>
</feature>
<feature type="glycosylation site" description="N-linked (GlcNAc...) asparagine" evidence="1">
    <location>
        <position position="55"/>
    </location>
</feature>
<feature type="glycosylation site" description="N-linked (GlcNAc...) asparagine" evidence="1">
    <location>
        <position position="111"/>
    </location>
</feature>
<feature type="glycosylation site" description="N-linked (GlcNAc...) asparagine" evidence="1">
    <location>
        <position position="231"/>
    </location>
</feature>
<feature type="glycosylation site" description="N-linked (GlcNAc...) asparagine" evidence="1">
    <location>
        <position position="237"/>
    </location>
</feature>
<feature type="glycosylation site" description="N-linked (GlcNAc...) asparagine" evidence="1">
    <location>
        <position position="253"/>
    </location>
</feature>
<feature type="glycosylation site" description="N-linked (GlcNAc...) asparagine" evidence="1">
    <location>
        <position position="269"/>
    </location>
</feature>
<feature type="glycosylation site" description="N-linked (GlcNAc...) asparagine" evidence="1">
    <location>
        <position position="290"/>
    </location>
</feature>
<feature type="glycosylation site" description="N-linked (GlcNAc...) asparagine" evidence="1">
    <location>
        <position position="302"/>
    </location>
</feature>
<feature type="disulfide bond" evidence="2">
    <location>
        <begin position="44"/>
        <end position="97"/>
    </location>
</feature>
<feature type="disulfide bond" evidence="2">
    <location>
        <begin position="149"/>
        <end position="199"/>
    </location>
</feature>
<feature type="disulfide bond" evidence="2">
    <location>
        <begin position="252"/>
        <end position="319"/>
    </location>
</feature>
<protein>
    <recommendedName>
        <fullName>Interleukin-1 receptor-like 2</fullName>
        <ecNumber evidence="3">3.2.2.6</ecNumber>
    </recommendedName>
    <alternativeName>
        <fullName>IL-36 receptor</fullName>
    </alternativeName>
    <alternativeName>
        <fullName>Interleukin-1 receptor-related protein 2</fullName>
        <shortName>IL-1Rrp2</shortName>
        <shortName>IL1R-rp2</shortName>
    </alternativeName>
</protein>
<organism>
    <name type="scientific">Mus musculus</name>
    <name type="common">Mouse</name>
    <dbReference type="NCBI Taxonomy" id="10090"/>
    <lineage>
        <taxon>Eukaryota</taxon>
        <taxon>Metazoa</taxon>
        <taxon>Chordata</taxon>
        <taxon>Craniata</taxon>
        <taxon>Vertebrata</taxon>
        <taxon>Euteleostomi</taxon>
        <taxon>Mammalia</taxon>
        <taxon>Eutheria</taxon>
        <taxon>Euarchontoglires</taxon>
        <taxon>Glires</taxon>
        <taxon>Rodentia</taxon>
        <taxon>Myomorpha</taxon>
        <taxon>Muroidea</taxon>
        <taxon>Muridae</taxon>
        <taxon>Murinae</taxon>
        <taxon>Mus</taxon>
        <taxon>Mus</taxon>
    </lineage>
</organism>
<sequence>MGVTSLLFCGVFFLLLLFVAADTCEDIFMHNVIISEGQPFPFNCTYPPETNGAVNLTWYKTPSKSPVSNNRHLRVHQDQTWILFLPLTLEDSGIYQCVIRNAHNCYQIAVNLTVLKNHWCDSSMEGSPVNSPDVYQQILPIGKSGSLNCHLYFPESCALDSIKWYKGCEEIKAGKKYSPSGAKLLVNNVAVEDGGSYACSARLTHLGRHFTIRNYIAVNTKEVEYGRRIPNITYPKNNSIEVPLGSTLIVNCNITDTKENTNLRCWRVNNTLVDDYYKDSKRIQEGIETNVSLRDQIRYTVNITFLKVKMEDYGRPFTCHAGVSAAYIILIYPVPDFRAYLLGGLMAFLLLVVSVLFIYNSFKIDIMLWYRSAFHTAQAPDDEKLYDAYVLYPKYPRGSQGHDVDTLVLKILPEVLEKQCGYKLFIFGRDEFPGQAVASVIDENIKLCRRLMVFVAPESSSFGFLKNLSEEQIAVYNALIQHGMKVILIELEKVKDYSTMPESIQYIRQKHGAIQWDGDFTEQSQCAKTKFWKKVRYHMPPRRYPASSPVQLLGHIPCNCKAGKCNAATGLITP</sequence>
<keyword id="KW-1015">Disulfide bond</keyword>
<keyword id="KW-0325">Glycoprotein</keyword>
<keyword id="KW-0378">Hydrolase</keyword>
<keyword id="KW-0391">Immunity</keyword>
<keyword id="KW-0393">Immunoglobulin domain</keyword>
<keyword id="KW-0395">Inflammatory response</keyword>
<keyword id="KW-0399">Innate immunity</keyword>
<keyword id="KW-0472">Membrane</keyword>
<keyword id="KW-0520">NAD</keyword>
<keyword id="KW-0675">Receptor</keyword>
<keyword id="KW-1185">Reference proteome</keyword>
<keyword id="KW-0677">Repeat</keyword>
<keyword id="KW-0732">Signal</keyword>
<keyword id="KW-0812">Transmembrane</keyword>
<keyword id="KW-1133">Transmembrane helix</keyword>
<accession>Q9ERS7</accession>
<reference key="1">
    <citation type="journal article" date="2000" name="J. Biol. Chem.">
        <title>Identification and characterization of two members of a novel class of the interleukin-1 receptor (IL-1R) family. Delineation of a new class of IL-1R-related proteins based on signaling.</title>
        <authorList>
            <person name="Born T.L."/>
            <person name="Smith D.E."/>
            <person name="Garka K.E."/>
            <person name="Renshaw B.R."/>
            <person name="Bertles J.S."/>
            <person name="Sims J.E."/>
        </authorList>
    </citation>
    <scope>NUCLEOTIDE SEQUENCE [MRNA]</scope>
</reference>
<reference key="2">
    <citation type="journal article" date="2011" name="Blood">
        <title>IL-36R ligands are potent regulators of dendritic and T cells.</title>
        <authorList>
            <person name="Vigne S."/>
            <person name="Palmer G."/>
            <person name="Lamacchia C."/>
            <person name="Martin P."/>
            <person name="Talabot-Ayer D."/>
            <person name="Rodriguez E."/>
            <person name="Ronchi F."/>
            <person name="Sallusto F."/>
            <person name="Dinh H."/>
            <person name="Sims J.E."/>
            <person name="Gabay C."/>
        </authorList>
    </citation>
    <scope>FUNCTION</scope>
    <scope>TISSUE SPECIFICITY</scope>
</reference>
<reference key="3">
    <citation type="journal article" date="2011" name="J. Biol. Chem.">
        <title>Interleukin-36 (IL-36) ligands require processing for full agonist (IL-36alpha, IL-36beta, and IL-36gamma) or antagonist (IL-36Ra) activity.</title>
        <authorList>
            <person name="Towne J.E."/>
            <person name="Renshaw B.R."/>
            <person name="Douangpanya J."/>
            <person name="Lipsky B.P."/>
            <person name="Shen M."/>
            <person name="Gabel C.A."/>
            <person name="Sims J.E."/>
        </authorList>
    </citation>
    <scope>INTERACTION WITH IL1RAP</scope>
</reference>
<reference key="4">
    <citation type="journal article" date="2012" name="J. Clin. Invest.">
        <title>Psoriasiform dermatitis is driven by IL-36-mediated DC-keratinocyte crosstalk.</title>
        <authorList>
            <person name="Tortola L."/>
            <person name="Rosenwald E."/>
            <person name="Abel B."/>
            <person name="Blumberg H."/>
            <person name="Schafer M."/>
            <person name="Coyle A.J."/>
            <person name="Renauld J.C."/>
            <person name="Werner S."/>
            <person name="Kisielow J."/>
            <person name="Kopf M."/>
        </authorList>
    </citation>
    <scope>FUNCTION</scope>
    <scope>DISRUPTION PHENOTYPE</scope>
</reference>
<proteinExistence type="evidence at protein level"/>
<gene>
    <name type="primary">Il1rl2</name>
</gene>
<name>ILRL2_MOUSE</name>
<dbReference type="EC" id="3.2.2.6" evidence="3"/>
<dbReference type="EMBL" id="AF284433">
    <property type="protein sequence ID" value="AAG21367.1"/>
    <property type="molecule type" value="mRNA"/>
</dbReference>
<dbReference type="CCDS" id="CCDS14910.1"/>
<dbReference type="RefSeq" id="NP_001343407.1">
    <property type="nucleotide sequence ID" value="NM_001356478.1"/>
</dbReference>
<dbReference type="RefSeq" id="NP_573456.1">
    <property type="nucleotide sequence ID" value="NM_133193.4"/>
</dbReference>
<dbReference type="RefSeq" id="XP_006495671.1">
    <property type="nucleotide sequence ID" value="XM_006495608.3"/>
</dbReference>
<dbReference type="RefSeq" id="XP_006495672.1">
    <property type="nucleotide sequence ID" value="XM_006495609.4"/>
</dbReference>
<dbReference type="RefSeq" id="XP_006495673.1">
    <property type="nucleotide sequence ID" value="XM_006495610.5"/>
</dbReference>
<dbReference type="RefSeq" id="XP_006495674.1">
    <property type="nucleotide sequence ID" value="XM_006495611.3"/>
</dbReference>
<dbReference type="RefSeq" id="XP_036021840.1">
    <property type="nucleotide sequence ID" value="XM_036165947.1"/>
</dbReference>
<dbReference type="SMR" id="Q9ERS7"/>
<dbReference type="FunCoup" id="Q9ERS7">
    <property type="interactions" value="281"/>
</dbReference>
<dbReference type="STRING" id="10090.ENSMUSP00000142248"/>
<dbReference type="GlyCosmos" id="Q9ERS7">
    <property type="glycosylation" value="9 sites, No reported glycans"/>
</dbReference>
<dbReference type="GlyGen" id="Q9ERS7">
    <property type="glycosylation" value="9 sites, 1 N-linked glycan (1 site)"/>
</dbReference>
<dbReference type="iPTMnet" id="Q9ERS7"/>
<dbReference type="PhosphoSitePlus" id="Q9ERS7"/>
<dbReference type="PaxDb" id="10090-ENSMUSP00000092630"/>
<dbReference type="ProteomicsDB" id="267331"/>
<dbReference type="Antibodypedia" id="2361">
    <property type="antibodies" value="300 antibodies from 34 providers"/>
</dbReference>
<dbReference type="DNASU" id="107527"/>
<dbReference type="Ensembl" id="ENSMUST00000095020.9">
    <property type="protein sequence ID" value="ENSMUSP00000092630.4"/>
    <property type="gene ID" value="ENSMUSG00000070942.9"/>
</dbReference>
<dbReference type="Ensembl" id="ENSMUST00000194296.6">
    <property type="protein sequence ID" value="ENSMUSP00000142248.2"/>
    <property type="gene ID" value="ENSMUSG00000070942.9"/>
</dbReference>
<dbReference type="GeneID" id="107527"/>
<dbReference type="KEGG" id="mmu:107527"/>
<dbReference type="UCSC" id="uc007atx.1">
    <property type="organism name" value="mouse"/>
</dbReference>
<dbReference type="AGR" id="MGI:1913107"/>
<dbReference type="CTD" id="8808"/>
<dbReference type="MGI" id="MGI:1913107">
    <property type="gene designation" value="Il1rl2"/>
</dbReference>
<dbReference type="VEuPathDB" id="HostDB:ENSMUSG00000070942"/>
<dbReference type="eggNOG" id="ENOG502QWEU">
    <property type="taxonomic scope" value="Eukaryota"/>
</dbReference>
<dbReference type="GeneTree" id="ENSGT01090000259985"/>
<dbReference type="HOGENOM" id="CLU_025552_3_0_1"/>
<dbReference type="InParanoid" id="Q9ERS7"/>
<dbReference type="OMA" id="CHLNFPQ"/>
<dbReference type="OrthoDB" id="6132459at2759"/>
<dbReference type="PhylomeDB" id="Q9ERS7"/>
<dbReference type="TreeFam" id="TF325519"/>
<dbReference type="Reactome" id="R-MMU-9007892">
    <property type="pathway name" value="Interleukin-38 signaling"/>
</dbReference>
<dbReference type="Reactome" id="R-MMU-9014826">
    <property type="pathway name" value="Interleukin-36 pathway"/>
</dbReference>
<dbReference type="BioGRID-ORCS" id="107527">
    <property type="hits" value="2 hits in 77 CRISPR screens"/>
</dbReference>
<dbReference type="ChiTaRS" id="Il1rl2">
    <property type="organism name" value="mouse"/>
</dbReference>
<dbReference type="PRO" id="PR:Q9ERS7"/>
<dbReference type="Proteomes" id="UP000000589">
    <property type="component" value="Chromosome 1"/>
</dbReference>
<dbReference type="RNAct" id="Q9ERS7">
    <property type="molecule type" value="protein"/>
</dbReference>
<dbReference type="Bgee" id="ENSMUSG00000070942">
    <property type="expression patterns" value="Expressed in lip and 125 other cell types or tissues"/>
</dbReference>
<dbReference type="ExpressionAtlas" id="Q9ERS7">
    <property type="expression patterns" value="baseline and differential"/>
</dbReference>
<dbReference type="GO" id="GO:0016020">
    <property type="term" value="C:membrane"/>
    <property type="evidence" value="ECO:0007669"/>
    <property type="project" value="UniProtKB-SubCell"/>
</dbReference>
<dbReference type="GO" id="GO:0004896">
    <property type="term" value="F:cytokine receptor activity"/>
    <property type="evidence" value="ECO:0000250"/>
    <property type="project" value="MGI"/>
</dbReference>
<dbReference type="GO" id="GO:0004909">
    <property type="term" value="F:interleukin-1, type I, activating receptor activity"/>
    <property type="evidence" value="ECO:0007669"/>
    <property type="project" value="InterPro"/>
</dbReference>
<dbReference type="GO" id="GO:0061809">
    <property type="term" value="F:NAD+ nucleosidase activity, cyclic ADP-ribose generating"/>
    <property type="evidence" value="ECO:0007669"/>
    <property type="project" value="UniProtKB-EC"/>
</dbReference>
<dbReference type="GO" id="GO:0019221">
    <property type="term" value="P:cytokine-mediated signaling pathway"/>
    <property type="evidence" value="ECO:0000315"/>
    <property type="project" value="MGI"/>
</dbReference>
<dbReference type="GO" id="GO:0006954">
    <property type="term" value="P:inflammatory response"/>
    <property type="evidence" value="ECO:0000315"/>
    <property type="project" value="MGI"/>
</dbReference>
<dbReference type="GO" id="GO:0045087">
    <property type="term" value="P:innate immune response"/>
    <property type="evidence" value="ECO:0007669"/>
    <property type="project" value="UniProtKB-KW"/>
</dbReference>
<dbReference type="GO" id="GO:0032755">
    <property type="term" value="P:positive regulation of interleukin-6 production"/>
    <property type="evidence" value="ECO:0000316"/>
    <property type="project" value="MGI"/>
</dbReference>
<dbReference type="GO" id="GO:0045582">
    <property type="term" value="P:positive regulation of T cell differentiation"/>
    <property type="evidence" value="ECO:0000315"/>
    <property type="project" value="MGI"/>
</dbReference>
<dbReference type="GO" id="GO:0050727">
    <property type="term" value="P:regulation of inflammatory response"/>
    <property type="evidence" value="ECO:0000315"/>
    <property type="project" value="MGI"/>
</dbReference>
<dbReference type="FunFam" id="3.40.50.10140:FF:000002">
    <property type="entry name" value="Interleukin 1 receptor accessory protein"/>
    <property type="match status" value="1"/>
</dbReference>
<dbReference type="FunFam" id="2.60.40.10:FF:001096">
    <property type="entry name" value="Interleukin 1 receptor like 2"/>
    <property type="match status" value="1"/>
</dbReference>
<dbReference type="FunFam" id="2.60.40.10:FF:001302">
    <property type="entry name" value="Interleukin 1 receptor like 2"/>
    <property type="match status" value="1"/>
</dbReference>
<dbReference type="FunFam" id="2.60.40.10:FF:000188">
    <property type="entry name" value="Interleukin-1 receptor accessory protein-like 1"/>
    <property type="match status" value="1"/>
</dbReference>
<dbReference type="Gene3D" id="2.60.40.10">
    <property type="entry name" value="Immunoglobulins"/>
    <property type="match status" value="3"/>
</dbReference>
<dbReference type="Gene3D" id="3.40.50.10140">
    <property type="entry name" value="Toll/interleukin-1 receptor homology (TIR) domain"/>
    <property type="match status" value="1"/>
</dbReference>
<dbReference type="InterPro" id="IPR007110">
    <property type="entry name" value="Ig-like_dom"/>
</dbReference>
<dbReference type="InterPro" id="IPR036179">
    <property type="entry name" value="Ig-like_dom_sf"/>
</dbReference>
<dbReference type="InterPro" id="IPR013783">
    <property type="entry name" value="Ig-like_fold"/>
</dbReference>
<dbReference type="InterPro" id="IPR003599">
    <property type="entry name" value="Ig_sub"/>
</dbReference>
<dbReference type="InterPro" id="IPR003598">
    <property type="entry name" value="Ig_sub2"/>
</dbReference>
<dbReference type="InterPro" id="IPR015621">
    <property type="entry name" value="IL-1_rcpt_fam"/>
</dbReference>
<dbReference type="InterPro" id="IPR004076">
    <property type="entry name" value="IL-1_rcpt_I-typ"/>
</dbReference>
<dbReference type="InterPro" id="IPR004074">
    <property type="entry name" value="IL-1_rcpt_I/II-typ"/>
</dbReference>
<dbReference type="InterPro" id="IPR000157">
    <property type="entry name" value="TIR_dom"/>
</dbReference>
<dbReference type="InterPro" id="IPR035897">
    <property type="entry name" value="Toll_tir_struct_dom_sf"/>
</dbReference>
<dbReference type="PANTHER" id="PTHR11890">
    <property type="entry name" value="INTERLEUKIN-1 RECEPTOR FAMILY MEMBER"/>
    <property type="match status" value="1"/>
</dbReference>
<dbReference type="PANTHER" id="PTHR11890:SF9">
    <property type="entry name" value="INTERLEUKIN-1 RECEPTOR-LIKE 2"/>
    <property type="match status" value="1"/>
</dbReference>
<dbReference type="Pfam" id="PF13895">
    <property type="entry name" value="Ig_2"/>
    <property type="match status" value="2"/>
</dbReference>
<dbReference type="Pfam" id="PF01582">
    <property type="entry name" value="TIR"/>
    <property type="match status" value="1"/>
</dbReference>
<dbReference type="PRINTS" id="PR01538">
    <property type="entry name" value="INTRLEUKN1R1"/>
</dbReference>
<dbReference type="PRINTS" id="PR01536">
    <property type="entry name" value="INTRLKN1R12F"/>
</dbReference>
<dbReference type="PRINTS" id="PR01537">
    <property type="entry name" value="INTRLKN1R1F"/>
</dbReference>
<dbReference type="SMART" id="SM00409">
    <property type="entry name" value="IG"/>
    <property type="match status" value="3"/>
</dbReference>
<dbReference type="SMART" id="SM00408">
    <property type="entry name" value="IGc2"/>
    <property type="match status" value="2"/>
</dbReference>
<dbReference type="SMART" id="SM00255">
    <property type="entry name" value="TIR"/>
    <property type="match status" value="1"/>
</dbReference>
<dbReference type="SUPFAM" id="SSF48726">
    <property type="entry name" value="Immunoglobulin"/>
    <property type="match status" value="3"/>
</dbReference>
<dbReference type="SUPFAM" id="SSF52200">
    <property type="entry name" value="Toll/Interleukin receptor TIR domain"/>
    <property type="match status" value="1"/>
</dbReference>
<dbReference type="PROSITE" id="PS50835">
    <property type="entry name" value="IG_LIKE"/>
    <property type="match status" value="2"/>
</dbReference>
<dbReference type="PROSITE" id="PS50104">
    <property type="entry name" value="TIR"/>
    <property type="match status" value="1"/>
</dbReference>
<comment type="function">
    <text evidence="4 6">Receptor for interleukin-36 (IL36A, IL36B and IL36G). After binding to interleukin-36 associates with the coreceptor IL1RAP to form the interleukin-36 receptor complex which mediates interleukin-36-dependent activation of NF-kappa-B, MAPK and other pathways. The IL-36 signaling system is thought to be present in epithelial barriers and to take part in local inflammatory response; it is similar to the IL-1 system. Seems to be involved in skin inflammatory response by induction of the IL-23/IL-17/IL-22 pathway.</text>
</comment>
<comment type="catalytic activity">
    <reaction evidence="3">
        <text>NAD(+) + H2O = ADP-D-ribose + nicotinamide + H(+)</text>
        <dbReference type="Rhea" id="RHEA:16301"/>
        <dbReference type="ChEBI" id="CHEBI:15377"/>
        <dbReference type="ChEBI" id="CHEBI:15378"/>
        <dbReference type="ChEBI" id="CHEBI:17154"/>
        <dbReference type="ChEBI" id="CHEBI:57540"/>
        <dbReference type="ChEBI" id="CHEBI:57967"/>
        <dbReference type="EC" id="3.2.2.6"/>
    </reaction>
    <physiologicalReaction direction="left-to-right" evidence="3">
        <dbReference type="Rhea" id="RHEA:16302"/>
    </physiologicalReaction>
</comment>
<comment type="subunit">
    <text evidence="5">Interacts with IL1RAP; the association is enhanced by IL36B indicative for an functional signaling complex and inhibited by IL36RN.</text>
</comment>
<comment type="subcellular location">
    <subcellularLocation>
        <location>Membrane</location>
        <topology>Single-pass type I membrane protein</topology>
    </subcellularLocation>
</comment>
<comment type="tissue specificity">
    <text evidence="4">Expressed in bone marrow-derived dendritic cells, splenic CD4(+) T-cells, bone marrow-derived macrophages and bone marrow-derived neutrophils.</text>
</comment>
<comment type="domain">
    <text evidence="3">The TIR domain mediates NAD(+) hydrolase (NADase) activity. Self-association of TIR domains is required for NADase activity.</text>
</comment>
<comment type="disruption phenotype">
    <text evidence="6">Complete protection from imiquimodum (IMQ)-induced skin pathology observed in wild-type mice, including hyperkeratosis, acanthosis, neutrophil recruitment, and expansion of IL-17-producing T-cells.</text>
</comment>
<comment type="similarity">
    <text evidence="7">Belongs to the interleukin-1 receptor family.</text>
</comment>